<comment type="function">
    <text evidence="1">Plays a role in cell envelope biogenesis, maintenance of cell envelope integrity and membrane homeostasis.</text>
</comment>
<comment type="subcellular location">
    <subcellularLocation>
        <location evidence="1">Cell inner membrane</location>
        <topology evidence="1">Multi-pass membrane protein</topology>
    </subcellularLocation>
</comment>
<comment type="similarity">
    <text evidence="1">Belongs to the YciB family.</text>
</comment>
<keyword id="KW-0997">Cell inner membrane</keyword>
<keyword id="KW-1003">Cell membrane</keyword>
<keyword id="KW-0472">Membrane</keyword>
<keyword id="KW-1185">Reference proteome</keyword>
<keyword id="KW-0812">Transmembrane</keyword>
<keyword id="KW-1133">Transmembrane helix</keyword>
<accession>Q084P1</accession>
<feature type="chain" id="PRO_1000021057" description="Inner membrane-spanning protein YciB">
    <location>
        <begin position="1"/>
        <end position="183"/>
    </location>
</feature>
<feature type="transmembrane region" description="Helical" evidence="1">
    <location>
        <begin position="22"/>
        <end position="42"/>
    </location>
</feature>
<feature type="transmembrane region" description="Helical" evidence="1">
    <location>
        <begin position="50"/>
        <end position="70"/>
    </location>
</feature>
<feature type="transmembrane region" description="Helical" evidence="1">
    <location>
        <begin position="72"/>
        <end position="92"/>
    </location>
</feature>
<feature type="transmembrane region" description="Helical" evidence="1">
    <location>
        <begin position="118"/>
        <end position="138"/>
    </location>
</feature>
<feature type="transmembrane region" description="Helical" evidence="1">
    <location>
        <begin position="148"/>
        <end position="168"/>
    </location>
</feature>
<gene>
    <name evidence="1" type="primary">yciB</name>
    <name type="ordered locus">Sfri_1422</name>
</gene>
<dbReference type="EMBL" id="CP000447">
    <property type="protein sequence ID" value="ABI71274.1"/>
    <property type="molecule type" value="Genomic_DNA"/>
</dbReference>
<dbReference type="RefSeq" id="WP_011636895.1">
    <property type="nucleotide sequence ID" value="NC_008345.1"/>
</dbReference>
<dbReference type="STRING" id="318167.Sfri_1422"/>
<dbReference type="KEGG" id="sfr:Sfri_1422"/>
<dbReference type="eggNOG" id="COG2917">
    <property type="taxonomic scope" value="Bacteria"/>
</dbReference>
<dbReference type="HOGENOM" id="CLU_089554_2_0_6"/>
<dbReference type="OrthoDB" id="9788219at2"/>
<dbReference type="Proteomes" id="UP000000684">
    <property type="component" value="Chromosome"/>
</dbReference>
<dbReference type="GO" id="GO:0005886">
    <property type="term" value="C:plasma membrane"/>
    <property type="evidence" value="ECO:0007669"/>
    <property type="project" value="UniProtKB-SubCell"/>
</dbReference>
<dbReference type="HAMAP" id="MF_00189">
    <property type="entry name" value="YciB"/>
    <property type="match status" value="1"/>
</dbReference>
<dbReference type="InterPro" id="IPR006008">
    <property type="entry name" value="YciB"/>
</dbReference>
<dbReference type="NCBIfam" id="TIGR00997">
    <property type="entry name" value="ispZ"/>
    <property type="match status" value="1"/>
</dbReference>
<dbReference type="NCBIfam" id="NF001324">
    <property type="entry name" value="PRK00259.1-2"/>
    <property type="match status" value="1"/>
</dbReference>
<dbReference type="PANTHER" id="PTHR36917:SF1">
    <property type="entry name" value="INNER MEMBRANE-SPANNING PROTEIN YCIB"/>
    <property type="match status" value="1"/>
</dbReference>
<dbReference type="PANTHER" id="PTHR36917">
    <property type="entry name" value="INTRACELLULAR SEPTATION PROTEIN A-RELATED"/>
    <property type="match status" value="1"/>
</dbReference>
<dbReference type="Pfam" id="PF04279">
    <property type="entry name" value="IspA"/>
    <property type="match status" value="1"/>
</dbReference>
<name>YCIB_SHEFN</name>
<reference key="1">
    <citation type="submission" date="2006-08" db="EMBL/GenBank/DDBJ databases">
        <title>Complete sequence of Shewanella frigidimarina NCIMB 400.</title>
        <authorList>
            <consortium name="US DOE Joint Genome Institute"/>
            <person name="Copeland A."/>
            <person name="Lucas S."/>
            <person name="Lapidus A."/>
            <person name="Barry K."/>
            <person name="Detter J.C."/>
            <person name="Glavina del Rio T."/>
            <person name="Hammon N."/>
            <person name="Israni S."/>
            <person name="Dalin E."/>
            <person name="Tice H."/>
            <person name="Pitluck S."/>
            <person name="Fredrickson J.K."/>
            <person name="Kolker E."/>
            <person name="McCuel L.A."/>
            <person name="DiChristina T."/>
            <person name="Nealson K.H."/>
            <person name="Newman D."/>
            <person name="Tiedje J.M."/>
            <person name="Zhou J."/>
            <person name="Romine M.F."/>
            <person name="Culley D.E."/>
            <person name="Serres M."/>
            <person name="Chertkov O."/>
            <person name="Brettin T."/>
            <person name="Bruce D."/>
            <person name="Han C."/>
            <person name="Tapia R."/>
            <person name="Gilna P."/>
            <person name="Schmutz J."/>
            <person name="Larimer F."/>
            <person name="Land M."/>
            <person name="Hauser L."/>
            <person name="Kyrpides N."/>
            <person name="Mikhailova N."/>
            <person name="Richardson P."/>
        </authorList>
    </citation>
    <scope>NUCLEOTIDE SEQUENCE [LARGE SCALE GENOMIC DNA]</scope>
    <source>
        <strain>NCIMB 400</strain>
    </source>
</reference>
<protein>
    <recommendedName>
        <fullName evidence="1">Inner membrane-spanning protein YciB</fullName>
    </recommendedName>
</protein>
<proteinExistence type="inferred from homology"/>
<evidence type="ECO:0000255" key="1">
    <source>
        <dbReference type="HAMAP-Rule" id="MF_00189"/>
    </source>
</evidence>
<organism>
    <name type="scientific">Shewanella frigidimarina (strain NCIMB 400)</name>
    <dbReference type="NCBI Taxonomy" id="318167"/>
    <lineage>
        <taxon>Bacteria</taxon>
        <taxon>Pseudomonadati</taxon>
        <taxon>Pseudomonadota</taxon>
        <taxon>Gammaproteobacteria</taxon>
        <taxon>Alteromonadales</taxon>
        <taxon>Shewanellaceae</taxon>
        <taxon>Shewanella</taxon>
    </lineage>
</organism>
<sequence length="183" mass="20990">MKQLLDFLPLVIFFAVYKFYDIYAATGVLIAATAIQLVITYLIYKHIEKMHLATFAMVTVFGSLTLFFHDDAFIKWKVSIVYALFAIGLIASQIMGKSALKSMLGKEMKVDDRIWAQVTWYWVGFFVLCSFANIYIAFNLPLETWVNFKVFGLTALTLINTVITVVYLYKNMQDDNSQPTDNQ</sequence>